<feature type="chain" id="PRO_0000063319" description="Chaperonin GroEL 2">
    <location>
        <begin position="1"/>
        <end position="546"/>
    </location>
</feature>
<feature type="region of interest" description="Disordered" evidence="2">
    <location>
        <begin position="524"/>
        <end position="546"/>
    </location>
</feature>
<feature type="compositionally biased region" description="Gly residues" evidence="2">
    <location>
        <begin position="537"/>
        <end position="546"/>
    </location>
</feature>
<feature type="binding site" evidence="1">
    <location>
        <begin position="30"/>
        <end position="33"/>
    </location>
    <ligand>
        <name>ATP</name>
        <dbReference type="ChEBI" id="CHEBI:30616"/>
    </ligand>
</feature>
<feature type="binding site" evidence="1">
    <location>
        <position position="51"/>
    </location>
    <ligand>
        <name>ATP</name>
        <dbReference type="ChEBI" id="CHEBI:30616"/>
    </ligand>
</feature>
<feature type="binding site" evidence="1">
    <location>
        <begin position="87"/>
        <end position="91"/>
    </location>
    <ligand>
        <name>ATP</name>
        <dbReference type="ChEBI" id="CHEBI:30616"/>
    </ligand>
</feature>
<feature type="binding site" evidence="1">
    <location>
        <position position="415"/>
    </location>
    <ligand>
        <name>ATP</name>
        <dbReference type="ChEBI" id="CHEBI:30616"/>
    </ligand>
</feature>
<feature type="binding site" evidence="1">
    <location>
        <begin position="479"/>
        <end position="481"/>
    </location>
    <ligand>
        <name>ATP</name>
        <dbReference type="ChEBI" id="CHEBI:30616"/>
    </ligand>
</feature>
<feature type="binding site" evidence="1">
    <location>
        <position position="495"/>
    </location>
    <ligand>
        <name>ATP</name>
        <dbReference type="ChEBI" id="CHEBI:30616"/>
    </ligand>
</feature>
<comment type="function">
    <text evidence="1">Together with its co-chaperonin GroES, plays an essential role in assisting protein folding. The GroEL-GroES system forms a nano-cage that allows encapsulation of the non-native substrate proteins and provides a physical environment optimized to promote and accelerate protein folding.</text>
</comment>
<comment type="catalytic activity">
    <reaction evidence="1">
        <text>ATP + H2O + a folded polypeptide = ADP + phosphate + an unfolded polypeptide.</text>
        <dbReference type="EC" id="5.6.1.7"/>
    </reaction>
</comment>
<comment type="subunit">
    <text evidence="1">Forms a cylinder of 14 subunits composed of two heptameric rings stacked back-to-back. Interacts with the co-chaperonin GroES.</text>
</comment>
<comment type="subcellular location">
    <subcellularLocation>
        <location evidence="1">Cytoplasm</location>
    </subcellularLocation>
</comment>
<comment type="similarity">
    <text evidence="1">Belongs to the chaperonin (HSP60) family.</text>
</comment>
<protein>
    <recommendedName>
        <fullName evidence="1">Chaperonin GroEL 2</fullName>
        <ecNumber evidence="1">5.6.1.7</ecNumber>
    </recommendedName>
    <alternativeName>
        <fullName evidence="1">60 kDa chaperonin 2</fullName>
    </alternativeName>
    <alternativeName>
        <fullName evidence="1">Chaperonin-60 2</fullName>
        <shortName evidence="1">Cpn60 2</shortName>
    </alternativeName>
</protein>
<sequence>MAAKEIIFHDGARAKLVEGVNLLANAVKVTLGPKGRNVVLERSFGSPVVTKDGVSVAKEIELADKVQNIGAQLVKEVASKTSDAAGDGTTTATVLAQAIVREGQKYVAAGLNPLDLKRGIDKAVAAAVDELKKISKPTTTSKEIAQVATISANGEESIGQRIAEAIDRVGKEGVITVEDGKSLADELDVVEGLQFDRGYLSPYFINHPERQLAVLDEPFILLHDKKISNIRDLLPVLEQVAKAGRPLLIVAEDVEGEALATLVVNNIRGILKTVAVKAPGFGDRRKALLEDIAILTGGQVITEETGLTLEKATLQELGRAKRIEVGKENTTLIDGAGDKPNIDARVKQIRAQIAEATSDYDREKLQERVAKLAGGVAVIKVGGATEVEVKEKKDRVDDALHATRAAVEEGIVPGGGVALIRVKQAIAALAGANADQKAGISIVLRALEEPLRQIVANAGEEASVVVATVAAGQGNYGYNAATGEYGDLVESGVLDPTKVTRTALQNAASIAGLLLTTDATVHEAPKDAPPAAPAGVPGAGGPGFDF</sequence>
<proteinExistence type="inferred from homology"/>
<gene>
    <name evidence="1" type="primary">groEL2</name>
    <name evidence="1" type="synonym">groL2</name>
    <name type="ordered locus">BPSS0477</name>
</gene>
<dbReference type="EC" id="5.6.1.7" evidence="1"/>
<dbReference type="EMBL" id="BX571966">
    <property type="protein sequence ID" value="CAH37933.1"/>
    <property type="molecule type" value="Genomic_DNA"/>
</dbReference>
<dbReference type="RefSeq" id="YP_110499.1">
    <property type="nucleotide sequence ID" value="NC_006351.1"/>
</dbReference>
<dbReference type="SMR" id="Q63N20"/>
<dbReference type="STRING" id="272560.BPSS0477"/>
<dbReference type="KEGG" id="bps:BPSS0477"/>
<dbReference type="PATRIC" id="fig|272560.51.peg.6626"/>
<dbReference type="eggNOG" id="COG0459">
    <property type="taxonomic scope" value="Bacteria"/>
</dbReference>
<dbReference type="Proteomes" id="UP000000605">
    <property type="component" value="Chromosome 2"/>
</dbReference>
<dbReference type="GO" id="GO:0005737">
    <property type="term" value="C:cytoplasm"/>
    <property type="evidence" value="ECO:0007669"/>
    <property type="project" value="UniProtKB-SubCell"/>
</dbReference>
<dbReference type="GO" id="GO:0005524">
    <property type="term" value="F:ATP binding"/>
    <property type="evidence" value="ECO:0007669"/>
    <property type="project" value="UniProtKB-UniRule"/>
</dbReference>
<dbReference type="GO" id="GO:0140662">
    <property type="term" value="F:ATP-dependent protein folding chaperone"/>
    <property type="evidence" value="ECO:0007669"/>
    <property type="project" value="InterPro"/>
</dbReference>
<dbReference type="GO" id="GO:0016853">
    <property type="term" value="F:isomerase activity"/>
    <property type="evidence" value="ECO:0007669"/>
    <property type="project" value="UniProtKB-KW"/>
</dbReference>
<dbReference type="GO" id="GO:0051082">
    <property type="term" value="F:unfolded protein binding"/>
    <property type="evidence" value="ECO:0007669"/>
    <property type="project" value="UniProtKB-UniRule"/>
</dbReference>
<dbReference type="GO" id="GO:0042026">
    <property type="term" value="P:protein refolding"/>
    <property type="evidence" value="ECO:0007669"/>
    <property type="project" value="UniProtKB-UniRule"/>
</dbReference>
<dbReference type="CDD" id="cd03344">
    <property type="entry name" value="GroEL"/>
    <property type="match status" value="1"/>
</dbReference>
<dbReference type="FunFam" id="3.50.7.10:FF:000001">
    <property type="entry name" value="60 kDa chaperonin"/>
    <property type="match status" value="1"/>
</dbReference>
<dbReference type="Gene3D" id="3.50.7.10">
    <property type="entry name" value="GroEL"/>
    <property type="match status" value="1"/>
</dbReference>
<dbReference type="Gene3D" id="1.10.560.10">
    <property type="entry name" value="GroEL-like equatorial domain"/>
    <property type="match status" value="1"/>
</dbReference>
<dbReference type="Gene3D" id="3.30.260.10">
    <property type="entry name" value="TCP-1-like chaperonin intermediate domain"/>
    <property type="match status" value="1"/>
</dbReference>
<dbReference type="HAMAP" id="MF_00600">
    <property type="entry name" value="CH60"/>
    <property type="match status" value="1"/>
</dbReference>
<dbReference type="InterPro" id="IPR018370">
    <property type="entry name" value="Chaperonin_Cpn60_CS"/>
</dbReference>
<dbReference type="InterPro" id="IPR001844">
    <property type="entry name" value="Cpn60/GroEL"/>
</dbReference>
<dbReference type="InterPro" id="IPR002423">
    <property type="entry name" value="Cpn60/GroEL/TCP-1"/>
</dbReference>
<dbReference type="InterPro" id="IPR027409">
    <property type="entry name" value="GroEL-like_apical_dom_sf"/>
</dbReference>
<dbReference type="InterPro" id="IPR027413">
    <property type="entry name" value="GROEL-like_equatorial_sf"/>
</dbReference>
<dbReference type="InterPro" id="IPR027410">
    <property type="entry name" value="TCP-1-like_intermed_sf"/>
</dbReference>
<dbReference type="NCBIfam" id="TIGR02348">
    <property type="entry name" value="GroEL"/>
    <property type="match status" value="1"/>
</dbReference>
<dbReference type="NCBIfam" id="NF000592">
    <property type="entry name" value="PRK00013.1"/>
    <property type="match status" value="1"/>
</dbReference>
<dbReference type="NCBIfam" id="NF009487">
    <property type="entry name" value="PRK12849.1"/>
    <property type="match status" value="1"/>
</dbReference>
<dbReference type="NCBIfam" id="NF009488">
    <property type="entry name" value="PRK12850.1"/>
    <property type="match status" value="1"/>
</dbReference>
<dbReference type="NCBIfam" id="NF009489">
    <property type="entry name" value="PRK12851.1"/>
    <property type="match status" value="1"/>
</dbReference>
<dbReference type="PANTHER" id="PTHR45633">
    <property type="entry name" value="60 KDA HEAT SHOCK PROTEIN, MITOCHONDRIAL"/>
    <property type="match status" value="1"/>
</dbReference>
<dbReference type="Pfam" id="PF00118">
    <property type="entry name" value="Cpn60_TCP1"/>
    <property type="match status" value="1"/>
</dbReference>
<dbReference type="PRINTS" id="PR00298">
    <property type="entry name" value="CHAPERONIN60"/>
</dbReference>
<dbReference type="SUPFAM" id="SSF52029">
    <property type="entry name" value="GroEL apical domain-like"/>
    <property type="match status" value="1"/>
</dbReference>
<dbReference type="SUPFAM" id="SSF48592">
    <property type="entry name" value="GroEL equatorial domain-like"/>
    <property type="match status" value="1"/>
</dbReference>
<dbReference type="SUPFAM" id="SSF54849">
    <property type="entry name" value="GroEL-intermediate domain like"/>
    <property type="match status" value="1"/>
</dbReference>
<dbReference type="PROSITE" id="PS00296">
    <property type="entry name" value="CHAPERONINS_CPN60"/>
    <property type="match status" value="1"/>
</dbReference>
<evidence type="ECO:0000255" key="1">
    <source>
        <dbReference type="HAMAP-Rule" id="MF_00600"/>
    </source>
</evidence>
<evidence type="ECO:0000256" key="2">
    <source>
        <dbReference type="SAM" id="MobiDB-lite"/>
    </source>
</evidence>
<reference key="1">
    <citation type="journal article" date="2004" name="Proc. Natl. Acad. Sci. U.S.A.">
        <title>Genomic plasticity of the causative agent of melioidosis, Burkholderia pseudomallei.</title>
        <authorList>
            <person name="Holden M.T.G."/>
            <person name="Titball R.W."/>
            <person name="Peacock S.J."/>
            <person name="Cerdeno-Tarraga A.-M."/>
            <person name="Atkins T."/>
            <person name="Crossman L.C."/>
            <person name="Pitt T."/>
            <person name="Churcher C."/>
            <person name="Mungall K.L."/>
            <person name="Bentley S.D."/>
            <person name="Sebaihia M."/>
            <person name="Thomson N.R."/>
            <person name="Bason N."/>
            <person name="Beacham I.R."/>
            <person name="Brooks K."/>
            <person name="Brown K.A."/>
            <person name="Brown N.F."/>
            <person name="Challis G.L."/>
            <person name="Cherevach I."/>
            <person name="Chillingworth T."/>
            <person name="Cronin A."/>
            <person name="Crossett B."/>
            <person name="Davis P."/>
            <person name="DeShazer D."/>
            <person name="Feltwell T."/>
            <person name="Fraser A."/>
            <person name="Hance Z."/>
            <person name="Hauser H."/>
            <person name="Holroyd S."/>
            <person name="Jagels K."/>
            <person name="Keith K.E."/>
            <person name="Maddison M."/>
            <person name="Moule S."/>
            <person name="Price C."/>
            <person name="Quail M.A."/>
            <person name="Rabbinowitsch E."/>
            <person name="Rutherford K."/>
            <person name="Sanders M."/>
            <person name="Simmonds M."/>
            <person name="Songsivilai S."/>
            <person name="Stevens K."/>
            <person name="Tumapa S."/>
            <person name="Vesaratchavest M."/>
            <person name="Whitehead S."/>
            <person name="Yeats C."/>
            <person name="Barrell B.G."/>
            <person name="Oyston P.C.F."/>
            <person name="Parkhill J."/>
        </authorList>
    </citation>
    <scope>NUCLEOTIDE SEQUENCE [LARGE SCALE GENOMIC DNA]</scope>
    <source>
        <strain>K96243</strain>
    </source>
</reference>
<organism>
    <name type="scientific">Burkholderia pseudomallei (strain K96243)</name>
    <dbReference type="NCBI Taxonomy" id="272560"/>
    <lineage>
        <taxon>Bacteria</taxon>
        <taxon>Pseudomonadati</taxon>
        <taxon>Pseudomonadota</taxon>
        <taxon>Betaproteobacteria</taxon>
        <taxon>Burkholderiales</taxon>
        <taxon>Burkholderiaceae</taxon>
        <taxon>Burkholderia</taxon>
        <taxon>pseudomallei group</taxon>
    </lineage>
</organism>
<accession>Q63N20</accession>
<keyword id="KW-0067">ATP-binding</keyword>
<keyword id="KW-0143">Chaperone</keyword>
<keyword id="KW-0963">Cytoplasm</keyword>
<keyword id="KW-0413">Isomerase</keyword>
<keyword id="KW-0547">Nucleotide-binding</keyword>
<keyword id="KW-1185">Reference proteome</keyword>
<name>CH602_BURPS</name>